<reference key="1">
    <citation type="journal article" date="2004" name="Nature">
        <title>The DNA sequence and biology of human chromosome 19.</title>
        <authorList>
            <person name="Grimwood J."/>
            <person name="Gordon L.A."/>
            <person name="Olsen A.S."/>
            <person name="Terry A."/>
            <person name="Schmutz J."/>
            <person name="Lamerdin J.E."/>
            <person name="Hellsten U."/>
            <person name="Goodstein D."/>
            <person name="Couronne O."/>
            <person name="Tran-Gyamfi M."/>
            <person name="Aerts A."/>
            <person name="Altherr M."/>
            <person name="Ashworth L."/>
            <person name="Bajorek E."/>
            <person name="Black S."/>
            <person name="Branscomb E."/>
            <person name="Caenepeel S."/>
            <person name="Carrano A.V."/>
            <person name="Caoile C."/>
            <person name="Chan Y.M."/>
            <person name="Christensen M."/>
            <person name="Cleland C.A."/>
            <person name="Copeland A."/>
            <person name="Dalin E."/>
            <person name="Dehal P."/>
            <person name="Denys M."/>
            <person name="Detter J.C."/>
            <person name="Escobar J."/>
            <person name="Flowers D."/>
            <person name="Fotopulos D."/>
            <person name="Garcia C."/>
            <person name="Georgescu A.M."/>
            <person name="Glavina T."/>
            <person name="Gomez M."/>
            <person name="Gonzales E."/>
            <person name="Groza M."/>
            <person name="Hammon N."/>
            <person name="Hawkins T."/>
            <person name="Haydu L."/>
            <person name="Ho I."/>
            <person name="Huang W."/>
            <person name="Israni S."/>
            <person name="Jett J."/>
            <person name="Kadner K."/>
            <person name="Kimball H."/>
            <person name="Kobayashi A."/>
            <person name="Larionov V."/>
            <person name="Leem S.-H."/>
            <person name="Lopez F."/>
            <person name="Lou Y."/>
            <person name="Lowry S."/>
            <person name="Malfatti S."/>
            <person name="Martinez D."/>
            <person name="McCready P.M."/>
            <person name="Medina C."/>
            <person name="Morgan J."/>
            <person name="Nelson K."/>
            <person name="Nolan M."/>
            <person name="Ovcharenko I."/>
            <person name="Pitluck S."/>
            <person name="Pollard M."/>
            <person name="Popkie A.P."/>
            <person name="Predki P."/>
            <person name="Quan G."/>
            <person name="Ramirez L."/>
            <person name="Rash S."/>
            <person name="Retterer J."/>
            <person name="Rodriguez A."/>
            <person name="Rogers S."/>
            <person name="Salamov A."/>
            <person name="Salazar A."/>
            <person name="She X."/>
            <person name="Smith D."/>
            <person name="Slezak T."/>
            <person name="Solovyev V."/>
            <person name="Thayer N."/>
            <person name="Tice H."/>
            <person name="Tsai M."/>
            <person name="Ustaszewska A."/>
            <person name="Vo N."/>
            <person name="Wagner M."/>
            <person name="Wheeler J."/>
            <person name="Wu K."/>
            <person name="Xie G."/>
            <person name="Yang J."/>
            <person name="Dubchak I."/>
            <person name="Furey T.S."/>
            <person name="DeJong P."/>
            <person name="Dickson M."/>
            <person name="Gordon D."/>
            <person name="Eichler E.E."/>
            <person name="Pennacchio L.A."/>
            <person name="Richardson P."/>
            <person name="Stubbs L."/>
            <person name="Rokhsar D.S."/>
            <person name="Myers R.M."/>
            <person name="Rubin E.M."/>
            <person name="Lucas S.M."/>
        </authorList>
    </citation>
    <scope>NUCLEOTIDE SEQUENCE [LARGE SCALE GENOMIC DNA]</scope>
</reference>
<reference key="2">
    <citation type="journal article" date="1993" name="Genomics">
        <title>A novel zinc finger cDNA with a polymorphic pentanucleotide repeat (ATTTT)n maps on human chromosome 19p.</title>
        <authorList>
            <person name="Chen H."/>
            <person name="Kalaitsidaki M."/>
            <person name="Warren A.C."/>
            <person name="Avramopoulos D."/>
            <person name="Antonarakis S.E."/>
        </authorList>
    </citation>
    <scope>NUCLEOTIDE SEQUENCE [GENOMIC DNA] OF 96-390</scope>
</reference>
<sequence>MAEIHNGGELCDFMENGEIFSEHSCLNAHMGTENTGDTYDCDEYGENFPMLHNSAPAGETLSVLNQCRKAFSLPPNVHQRTWIGDKSFEYSDCEEAFVDQSHLQANRITHNGETLYEQKQCGRAFTYSTSHAVSVKMHTVEKPYECKECGKFFRYSSYLNSHMRTHTGEKPYECKECGKCFTVSSHLVEHVRIHTGEKPYQCKECGRAFAGRSGLTKHVRIHTGEKPYECNECGKAYNRFYLLTEHFKTHTEEKPFECKVCGKSFRSSSCLKNHFRIHTGIKPYKCKECGKAFTVSSSLHNHVKIHTGEKPYECKDCGKAFATSSQLIEHIRTHTGEKPYICKECGKTFRASSHLQKHVRIHTGEKPYICNECGKAYNRFYLLTKHLKTH</sequence>
<comment type="function">
    <text>May be involved in transcriptional regulation.</text>
</comment>
<comment type="interaction">
    <interactant intactId="EBI-1228269">
        <id>P58317</id>
    </interactant>
    <interactant intactId="EBI-11530605">
        <id>Q9H257-2</id>
        <label>CARD9</label>
    </interactant>
    <organismsDiffer>false</organismsDiffer>
    <experiments>3</experiments>
</comment>
<comment type="interaction">
    <interactant intactId="EBI-1228269">
        <id>P58317</id>
    </interactant>
    <interactant intactId="EBI-751001">
        <id>Q14145</id>
        <label>KEAP1</label>
    </interactant>
    <organismsDiffer>false</organismsDiffer>
    <experiments>3</experiments>
</comment>
<comment type="interaction">
    <interactant intactId="EBI-1228269">
        <id>P58317</id>
    </interactant>
    <interactant intactId="EBI-10171774">
        <id>P60410</id>
        <label>KRTAP10-8</label>
    </interactant>
    <organismsDiffer>false</organismsDiffer>
    <experiments>3</experiments>
</comment>
<comment type="interaction">
    <interactant intactId="EBI-1228269">
        <id>P58317</id>
    </interactant>
    <interactant intactId="EBI-1210429">
        <id>Q9NYW8</id>
        <label>RBAK</label>
    </interactant>
    <organismsDiffer>false</organismsDiffer>
    <experiments>3</experiments>
</comment>
<comment type="interaction">
    <interactant intactId="EBI-1228269">
        <id>P58317</id>
    </interactant>
    <interactant intactId="EBI-725997">
        <id>Q8WV44</id>
        <label>TRIM41</label>
    </interactant>
    <organismsDiffer>false</organismsDiffer>
    <experiments>3</experiments>
</comment>
<comment type="interaction">
    <interactant intactId="EBI-1228269">
        <id>P58317</id>
    </interactant>
    <interactant intactId="EBI-5667516">
        <id>Q9Y2P0</id>
        <label>ZNF835</label>
    </interactant>
    <organismsDiffer>false</organismsDiffer>
    <experiments>3</experiments>
</comment>
<comment type="interaction">
    <interactant intactId="EBI-1228269">
        <id>P58317</id>
    </interactant>
    <interactant intactId="EBI-11962574">
        <id>Q96EG3</id>
        <label>ZNF837</label>
    </interactant>
    <organismsDiffer>false</organismsDiffer>
    <experiments>3</experiments>
</comment>
<comment type="subcellular location">
    <subcellularLocation>
        <location evidence="2">Nucleus</location>
    </subcellularLocation>
</comment>
<comment type="similarity">
    <text evidence="2">Belongs to the krueppel C2H2-type zinc-finger protein family.</text>
</comment>
<dbReference type="EMBL" id="AC008759">
    <property type="status" value="NOT_ANNOTATED_CDS"/>
    <property type="molecule type" value="Genomic_DNA"/>
</dbReference>
<dbReference type="EMBL" id="M99593">
    <property type="status" value="NOT_ANNOTATED_CDS"/>
    <property type="molecule type" value="Genomic_DNA"/>
</dbReference>
<dbReference type="CCDS" id="CCDS32902.1"/>
<dbReference type="CCDS" id="CCDS77228.1"/>
<dbReference type="PIR" id="A46017">
    <property type="entry name" value="A46017"/>
</dbReference>
<dbReference type="RefSeq" id="NP_001008727.1">
    <property type="nucleotide sequence ID" value="NM_001008727.5"/>
</dbReference>
<dbReference type="RefSeq" id="NP_001295198.1">
    <property type="nucleotide sequence ID" value="NM_001308269.3"/>
</dbReference>
<dbReference type="RefSeq" id="XP_016882728.1">
    <property type="nucleotide sequence ID" value="XM_017027239.2"/>
</dbReference>
<dbReference type="RefSeq" id="XP_054177976.1">
    <property type="nucleotide sequence ID" value="XM_054322001.1"/>
</dbReference>
<dbReference type="SMR" id="P58317"/>
<dbReference type="BioGRID" id="113474">
    <property type="interactions" value="49"/>
</dbReference>
<dbReference type="FunCoup" id="P58317">
    <property type="interactions" value="623"/>
</dbReference>
<dbReference type="IntAct" id="P58317">
    <property type="interactions" value="41"/>
</dbReference>
<dbReference type="STRING" id="9606.ENSP00000468643"/>
<dbReference type="iPTMnet" id="P58317"/>
<dbReference type="PhosphoSitePlus" id="P58317"/>
<dbReference type="BioMuta" id="ZNF121"/>
<dbReference type="DMDM" id="152031766"/>
<dbReference type="jPOST" id="P58317"/>
<dbReference type="MassIVE" id="P58317"/>
<dbReference type="PaxDb" id="9606-ENSP00000326967"/>
<dbReference type="PeptideAtlas" id="P58317"/>
<dbReference type="ProteomicsDB" id="57059"/>
<dbReference type="Pumba" id="P58317"/>
<dbReference type="Antibodypedia" id="25051">
    <property type="antibodies" value="52 antibodies from 14 providers"/>
</dbReference>
<dbReference type="DNASU" id="7675"/>
<dbReference type="Ensembl" id="ENST00000320451.7">
    <property type="protein sequence ID" value="ENSP00000326967.5"/>
    <property type="gene ID" value="ENSG00000197961.12"/>
</dbReference>
<dbReference type="Ensembl" id="ENST00000586602.5">
    <property type="protein sequence ID" value="ENSP00000468643.1"/>
    <property type="gene ID" value="ENSG00000197961.12"/>
</dbReference>
<dbReference type="GeneID" id="7675"/>
<dbReference type="KEGG" id="hsa:7675"/>
<dbReference type="MANE-Select" id="ENST00000320451.7">
    <property type="protein sequence ID" value="ENSP00000326967.5"/>
    <property type="RefSeq nucleotide sequence ID" value="NM_001008727.5"/>
    <property type="RefSeq protein sequence ID" value="NP_001008727.1"/>
</dbReference>
<dbReference type="UCSC" id="uc010dwt.3">
    <property type="organism name" value="human"/>
</dbReference>
<dbReference type="AGR" id="HGNC:12904"/>
<dbReference type="CTD" id="7675"/>
<dbReference type="DisGeNET" id="7675"/>
<dbReference type="GeneCards" id="ZNF121"/>
<dbReference type="HGNC" id="HGNC:12904">
    <property type="gene designation" value="ZNF121"/>
</dbReference>
<dbReference type="HPA" id="ENSG00000197961">
    <property type="expression patterns" value="Low tissue specificity"/>
</dbReference>
<dbReference type="MIM" id="194628">
    <property type="type" value="gene"/>
</dbReference>
<dbReference type="neXtProt" id="NX_P58317"/>
<dbReference type="OpenTargets" id="ENSG00000197961"/>
<dbReference type="PharmGKB" id="PA37493"/>
<dbReference type="VEuPathDB" id="HostDB:ENSG00000197961"/>
<dbReference type="eggNOG" id="KOG1721">
    <property type="taxonomic scope" value="Eukaryota"/>
</dbReference>
<dbReference type="GeneTree" id="ENSGT00940000163151"/>
<dbReference type="HOGENOM" id="CLU_002678_44_0_1"/>
<dbReference type="InParanoid" id="P58317"/>
<dbReference type="OMA" id="HAVSVQM"/>
<dbReference type="OrthoDB" id="40579at2759"/>
<dbReference type="PAN-GO" id="P58317">
    <property type="GO annotations" value="4 GO annotations based on evolutionary models"/>
</dbReference>
<dbReference type="PhylomeDB" id="P58317"/>
<dbReference type="TreeFam" id="TF341966"/>
<dbReference type="PathwayCommons" id="P58317"/>
<dbReference type="SignaLink" id="P58317"/>
<dbReference type="BioGRID-ORCS" id="7675">
    <property type="hits" value="8 hits in 1148 CRISPR screens"/>
</dbReference>
<dbReference type="ChiTaRS" id="ZNF121">
    <property type="organism name" value="human"/>
</dbReference>
<dbReference type="GenomeRNAi" id="7675"/>
<dbReference type="Pharos" id="P58317">
    <property type="development level" value="Tdark"/>
</dbReference>
<dbReference type="PRO" id="PR:P58317"/>
<dbReference type="Proteomes" id="UP000005640">
    <property type="component" value="Chromosome 19"/>
</dbReference>
<dbReference type="RNAct" id="P58317">
    <property type="molecule type" value="protein"/>
</dbReference>
<dbReference type="Bgee" id="ENSG00000197961">
    <property type="expression patterns" value="Expressed in skin of hip and 189 other cell types or tissues"/>
</dbReference>
<dbReference type="ExpressionAtlas" id="P58317">
    <property type="expression patterns" value="baseline and differential"/>
</dbReference>
<dbReference type="GO" id="GO:0005634">
    <property type="term" value="C:nucleus"/>
    <property type="evidence" value="ECO:0000318"/>
    <property type="project" value="GO_Central"/>
</dbReference>
<dbReference type="GO" id="GO:0000981">
    <property type="term" value="F:DNA-binding transcription factor activity, RNA polymerase II-specific"/>
    <property type="evidence" value="ECO:0000318"/>
    <property type="project" value="GO_Central"/>
</dbReference>
<dbReference type="GO" id="GO:0000978">
    <property type="term" value="F:RNA polymerase II cis-regulatory region sequence-specific DNA binding"/>
    <property type="evidence" value="ECO:0000318"/>
    <property type="project" value="GO_Central"/>
</dbReference>
<dbReference type="GO" id="GO:0008270">
    <property type="term" value="F:zinc ion binding"/>
    <property type="evidence" value="ECO:0007669"/>
    <property type="project" value="UniProtKB-KW"/>
</dbReference>
<dbReference type="GO" id="GO:0006357">
    <property type="term" value="P:regulation of transcription by RNA polymerase II"/>
    <property type="evidence" value="ECO:0000318"/>
    <property type="project" value="GO_Central"/>
</dbReference>
<dbReference type="FunFam" id="3.30.160.60:FF:003708">
    <property type="match status" value="1"/>
</dbReference>
<dbReference type="FunFam" id="3.30.160.60:FF:002063">
    <property type="entry name" value="RB associated KRAB zinc finger"/>
    <property type="match status" value="1"/>
</dbReference>
<dbReference type="FunFam" id="3.30.160.60:FF:000204">
    <property type="entry name" value="Zinc finger protein 331"/>
    <property type="match status" value="1"/>
</dbReference>
<dbReference type="FunFam" id="3.30.160.60:FF:000184">
    <property type="entry name" value="Zinc finger protein 333"/>
    <property type="match status" value="1"/>
</dbReference>
<dbReference type="FunFam" id="3.30.160.60:FF:000338">
    <property type="entry name" value="zinc finger protein 383"/>
    <property type="match status" value="1"/>
</dbReference>
<dbReference type="FunFam" id="3.30.160.60:FF:001498">
    <property type="entry name" value="Zinc finger protein 404"/>
    <property type="match status" value="1"/>
</dbReference>
<dbReference type="FunFam" id="3.30.160.60:FF:002254">
    <property type="entry name" value="Zinc finger protein 540"/>
    <property type="match status" value="1"/>
</dbReference>
<dbReference type="FunFam" id="3.30.160.60:FF:000963">
    <property type="entry name" value="zinc finger protein 546"/>
    <property type="match status" value="2"/>
</dbReference>
<dbReference type="Gene3D" id="3.30.160.60">
    <property type="entry name" value="Classic Zinc Finger"/>
    <property type="match status" value="10"/>
</dbReference>
<dbReference type="InterPro" id="IPR036236">
    <property type="entry name" value="Znf_C2H2_sf"/>
</dbReference>
<dbReference type="InterPro" id="IPR013087">
    <property type="entry name" value="Znf_C2H2_type"/>
</dbReference>
<dbReference type="PANTHER" id="PTHR14003">
    <property type="entry name" value="TRANSCRIPTIONAL REPRESSOR PROTEIN YY"/>
    <property type="match status" value="1"/>
</dbReference>
<dbReference type="PANTHER" id="PTHR14003:SF23">
    <property type="entry name" value="ZINC FINGER PROTEIN 143"/>
    <property type="match status" value="1"/>
</dbReference>
<dbReference type="Pfam" id="PF00096">
    <property type="entry name" value="zf-C2H2"/>
    <property type="match status" value="7"/>
</dbReference>
<dbReference type="Pfam" id="PF13465">
    <property type="entry name" value="zf-H2C2_2"/>
    <property type="match status" value="1"/>
</dbReference>
<dbReference type="SMART" id="SM00355">
    <property type="entry name" value="ZnF_C2H2"/>
    <property type="match status" value="9"/>
</dbReference>
<dbReference type="SUPFAM" id="SSF57667">
    <property type="entry name" value="beta-beta-alpha zinc fingers"/>
    <property type="match status" value="6"/>
</dbReference>
<dbReference type="PROSITE" id="PS00028">
    <property type="entry name" value="ZINC_FINGER_C2H2_1"/>
    <property type="match status" value="9"/>
</dbReference>
<dbReference type="PROSITE" id="PS50157">
    <property type="entry name" value="ZINC_FINGER_C2H2_2"/>
    <property type="match status" value="10"/>
</dbReference>
<proteinExistence type="evidence at protein level"/>
<keyword id="KW-0238">DNA-binding</keyword>
<keyword id="KW-0479">Metal-binding</keyword>
<keyword id="KW-0539">Nucleus</keyword>
<keyword id="KW-1267">Proteomics identification</keyword>
<keyword id="KW-1185">Reference proteome</keyword>
<keyword id="KW-0677">Repeat</keyword>
<keyword id="KW-0804">Transcription</keyword>
<keyword id="KW-0805">Transcription regulation</keyword>
<keyword id="KW-0862">Zinc</keyword>
<keyword id="KW-0863">Zinc-finger</keyword>
<organism>
    <name type="scientific">Homo sapiens</name>
    <name type="common">Human</name>
    <dbReference type="NCBI Taxonomy" id="9606"/>
    <lineage>
        <taxon>Eukaryota</taxon>
        <taxon>Metazoa</taxon>
        <taxon>Chordata</taxon>
        <taxon>Craniata</taxon>
        <taxon>Vertebrata</taxon>
        <taxon>Euteleostomi</taxon>
        <taxon>Mammalia</taxon>
        <taxon>Eutheria</taxon>
        <taxon>Euarchontoglires</taxon>
        <taxon>Primates</taxon>
        <taxon>Haplorrhini</taxon>
        <taxon>Catarrhini</taxon>
        <taxon>Hominidae</taxon>
        <taxon>Homo</taxon>
    </lineage>
</organism>
<accession>P58317</accession>
<evidence type="ECO:0000255" key="1">
    <source>
        <dbReference type="PROSITE-ProRule" id="PRU00042"/>
    </source>
</evidence>
<evidence type="ECO:0000305" key="2"/>
<gene>
    <name type="primary">ZNF121</name>
    <name type="synonym">ZNF20</name>
</gene>
<feature type="chain" id="PRO_0000047408" description="Zinc finger protein 121">
    <location>
        <begin position="1"/>
        <end position="390"/>
    </location>
</feature>
<feature type="zinc finger region" description="C2H2-type 1; degenerate" evidence="1">
    <location>
        <begin position="88"/>
        <end position="110"/>
    </location>
</feature>
<feature type="zinc finger region" description="C2H2-type 2; degenerate" evidence="1">
    <location>
        <begin position="116"/>
        <end position="138"/>
    </location>
</feature>
<feature type="zinc finger region" description="C2H2-type 3" evidence="1">
    <location>
        <begin position="144"/>
        <end position="166"/>
    </location>
</feature>
<feature type="zinc finger region" description="C2H2-type 4" evidence="1">
    <location>
        <begin position="172"/>
        <end position="194"/>
    </location>
</feature>
<feature type="zinc finger region" description="C2H2-type 5" evidence="1">
    <location>
        <begin position="200"/>
        <end position="222"/>
    </location>
</feature>
<feature type="zinc finger region" description="C2H2-type 6" evidence="1">
    <location>
        <begin position="228"/>
        <end position="250"/>
    </location>
</feature>
<feature type="zinc finger region" description="C2H2-type 7" evidence="1">
    <location>
        <begin position="256"/>
        <end position="278"/>
    </location>
</feature>
<feature type="zinc finger region" description="C2H2-type 8" evidence="1">
    <location>
        <begin position="284"/>
        <end position="306"/>
    </location>
</feature>
<feature type="zinc finger region" description="C2H2-type 9" evidence="1">
    <location>
        <begin position="312"/>
        <end position="334"/>
    </location>
</feature>
<feature type="zinc finger region" description="C2H2-type 10" evidence="1">
    <location>
        <begin position="340"/>
        <end position="362"/>
    </location>
</feature>
<feature type="zinc finger region" description="C2H2-type 11" evidence="1">
    <location>
        <begin position="368"/>
        <end position="390"/>
    </location>
</feature>
<feature type="sequence conflict" description="In Ref. 2; M99593." evidence="2" ref="2">
    <original>AF</original>
    <variation>NS</variation>
    <location>
        <begin position="96"/>
        <end position="97"/>
    </location>
</feature>
<feature type="sequence conflict" description="In Ref. 2; M99593." evidence="2" ref="2">
    <original>R</original>
    <variation>C</variation>
    <location>
        <position position="212"/>
    </location>
</feature>
<protein>
    <recommendedName>
        <fullName>Zinc finger protein 121</fullName>
    </recommendedName>
    <alternativeName>
        <fullName>Zinc finger protein 20</fullName>
    </alternativeName>
</protein>
<name>ZN121_HUMAN</name>